<reference key="1">
    <citation type="submission" date="1998-08" db="EMBL/GenBank/DDBJ databases">
        <title>Cloning of a novel human cDNA homologous to murine evolutionary conserved transcript.</title>
        <authorList>
            <person name="Zhang M."/>
            <person name="Yu L."/>
            <person name="Li N.G."/>
            <person name="Zhou Y."/>
            <person name="Zheng L.H."/>
            <person name="Zhao S.Y."/>
        </authorList>
    </citation>
    <scope>NUCLEOTIDE SEQUENCE [LARGE SCALE MRNA]</scope>
</reference>
<reference key="2">
    <citation type="submission" date="1998-09" db="EMBL/GenBank/DDBJ databases">
        <title>Human transcription factor IIB mRNA, complete cds.</title>
        <authorList>
            <person name="Peng Y."/>
            <person name="Song H."/>
            <person name="Dai M."/>
            <person name="Huang Q."/>
            <person name="Mao Y."/>
            <person name="Zhang Q."/>
            <person name="Mao M."/>
            <person name="Fu G."/>
            <person name="Luo M."/>
            <person name="Chen J."/>
            <person name="Hu R."/>
        </authorList>
    </citation>
    <scope>NUCLEOTIDE SEQUENCE [LARGE SCALE MRNA]</scope>
    <source>
        <tissue>Pituitary</tissue>
    </source>
</reference>
<reference key="3">
    <citation type="journal article" date="2004" name="Nature">
        <title>The sequence and analysis of duplication-rich human chromosome 16.</title>
        <authorList>
            <person name="Martin J."/>
            <person name="Han C."/>
            <person name="Gordon L.A."/>
            <person name="Terry A."/>
            <person name="Prabhakar S."/>
            <person name="She X."/>
            <person name="Xie G."/>
            <person name="Hellsten U."/>
            <person name="Chan Y.M."/>
            <person name="Altherr M."/>
            <person name="Couronne O."/>
            <person name="Aerts A."/>
            <person name="Bajorek E."/>
            <person name="Black S."/>
            <person name="Blumer H."/>
            <person name="Branscomb E."/>
            <person name="Brown N.C."/>
            <person name="Bruno W.J."/>
            <person name="Buckingham J.M."/>
            <person name="Callen D.F."/>
            <person name="Campbell C.S."/>
            <person name="Campbell M.L."/>
            <person name="Campbell E.W."/>
            <person name="Caoile C."/>
            <person name="Challacombe J.F."/>
            <person name="Chasteen L.A."/>
            <person name="Chertkov O."/>
            <person name="Chi H.C."/>
            <person name="Christensen M."/>
            <person name="Clark L.M."/>
            <person name="Cohn J.D."/>
            <person name="Denys M."/>
            <person name="Detter J.C."/>
            <person name="Dickson M."/>
            <person name="Dimitrijevic-Bussod M."/>
            <person name="Escobar J."/>
            <person name="Fawcett J.J."/>
            <person name="Flowers D."/>
            <person name="Fotopulos D."/>
            <person name="Glavina T."/>
            <person name="Gomez M."/>
            <person name="Gonzales E."/>
            <person name="Goodstein D."/>
            <person name="Goodwin L.A."/>
            <person name="Grady D.L."/>
            <person name="Grigoriev I."/>
            <person name="Groza M."/>
            <person name="Hammon N."/>
            <person name="Hawkins T."/>
            <person name="Haydu L."/>
            <person name="Hildebrand C.E."/>
            <person name="Huang W."/>
            <person name="Israni S."/>
            <person name="Jett J."/>
            <person name="Jewett P.B."/>
            <person name="Kadner K."/>
            <person name="Kimball H."/>
            <person name="Kobayashi A."/>
            <person name="Krawczyk M.-C."/>
            <person name="Leyba T."/>
            <person name="Longmire J.L."/>
            <person name="Lopez F."/>
            <person name="Lou Y."/>
            <person name="Lowry S."/>
            <person name="Ludeman T."/>
            <person name="Manohar C.F."/>
            <person name="Mark G.A."/>
            <person name="McMurray K.L."/>
            <person name="Meincke L.J."/>
            <person name="Morgan J."/>
            <person name="Moyzis R.K."/>
            <person name="Mundt M.O."/>
            <person name="Munk A.C."/>
            <person name="Nandkeshwar R.D."/>
            <person name="Pitluck S."/>
            <person name="Pollard M."/>
            <person name="Predki P."/>
            <person name="Parson-Quintana B."/>
            <person name="Ramirez L."/>
            <person name="Rash S."/>
            <person name="Retterer J."/>
            <person name="Ricke D.O."/>
            <person name="Robinson D.L."/>
            <person name="Rodriguez A."/>
            <person name="Salamov A."/>
            <person name="Saunders E.H."/>
            <person name="Scott D."/>
            <person name="Shough T."/>
            <person name="Stallings R.L."/>
            <person name="Stalvey M."/>
            <person name="Sutherland R.D."/>
            <person name="Tapia R."/>
            <person name="Tesmer J.G."/>
            <person name="Thayer N."/>
            <person name="Thompson L.S."/>
            <person name="Tice H."/>
            <person name="Torney D.C."/>
            <person name="Tran-Gyamfi M."/>
            <person name="Tsai M."/>
            <person name="Ulanovsky L.E."/>
            <person name="Ustaszewska A."/>
            <person name="Vo N."/>
            <person name="White P.S."/>
            <person name="Williams A.L."/>
            <person name="Wills P.L."/>
            <person name="Wu J.-R."/>
            <person name="Wu K."/>
            <person name="Yang J."/>
            <person name="DeJong P."/>
            <person name="Bruce D."/>
            <person name="Doggett N.A."/>
            <person name="Deaven L."/>
            <person name="Schmutz J."/>
            <person name="Grimwood J."/>
            <person name="Richardson P."/>
            <person name="Rokhsar D.S."/>
            <person name="Eichler E.E."/>
            <person name="Gilna P."/>
            <person name="Lucas S.M."/>
            <person name="Myers R.M."/>
            <person name="Rubin E.M."/>
            <person name="Pennacchio L.A."/>
        </authorList>
    </citation>
    <scope>NUCLEOTIDE SEQUENCE [LARGE SCALE GENOMIC DNA]</scope>
</reference>
<reference key="4">
    <citation type="journal article" date="2004" name="Genome Res.">
        <title>The status, quality, and expansion of the NIH full-length cDNA project: the Mammalian Gene Collection (MGC).</title>
        <authorList>
            <consortium name="The MGC Project Team"/>
        </authorList>
    </citation>
    <scope>NUCLEOTIDE SEQUENCE [LARGE SCALE MRNA]</scope>
    <source>
        <tissue>Muscle</tissue>
    </source>
</reference>
<reference key="5">
    <citation type="journal article" date="2010" name="Eukaryot. Cell">
        <title>Bug22p, a conserved centrosomal/ciliary protein also present in higher plants, is required for an effective ciliary stroke in Paramecium.</title>
        <authorList>
            <person name="Laligne C."/>
            <person name="Klotz C."/>
            <person name="de Loubresse N.G."/>
            <person name="Lemullois M."/>
            <person name="Hori M."/>
            <person name="Laurent F.X."/>
            <person name="Papon J.F."/>
            <person name="Louis B."/>
            <person name="Cohen J."/>
            <person name="Koll F."/>
        </authorList>
    </citation>
    <scope>SUBCELLULAR LOCATION</scope>
</reference>
<reference key="6">
    <citation type="journal article" date="2011" name="BMC Syst. Biol.">
        <title>Initial characterization of the human central proteome.</title>
        <authorList>
            <person name="Burkard T.R."/>
            <person name="Planyavsky M."/>
            <person name="Kaupe I."/>
            <person name="Breitwieser F.P."/>
            <person name="Buerckstuemmer T."/>
            <person name="Bennett K.L."/>
            <person name="Superti-Furga G."/>
            <person name="Colinge J."/>
        </authorList>
    </citation>
    <scope>IDENTIFICATION BY MASS SPECTROMETRY [LARGE SCALE ANALYSIS]</scope>
</reference>
<reference key="7">
    <citation type="journal article" date="2014" name="Biol. Open">
        <title>Bug22 influences cilium morphology and the post-translational modification of ciliary microtubules.</title>
        <authorList>
            <person name="Mendes Maia T."/>
            <person name="Gogendeau D."/>
            <person name="Pennetier C."/>
            <person name="Janke C."/>
            <person name="Basto R."/>
        </authorList>
    </citation>
    <scope>FUNCTION</scope>
    <scope>SUBCELLULAR LOCATION</scope>
</reference>
<reference evidence="6" key="8">
    <citation type="journal article" date="2022" name="Proc. Natl. Acad. Sci. U.S.A.">
        <title>SPACA9 is a lumenal protein of human ciliary singlet and doublet microtubules.</title>
        <authorList>
            <person name="Gui M."/>
            <person name="Croft J.T."/>
            <person name="Zabeo D."/>
            <person name="Acharya V."/>
            <person name="Kollman J.M."/>
            <person name="Burgoyne T."/>
            <person name="Hoog J.L."/>
            <person name="Brown A."/>
        </authorList>
    </citation>
    <scope>STRUCTURE BY ELECTRON MICROSCOPY (3.60 ANGSTROMS)</scope>
    <scope>FUNCTION</scope>
    <scope>SUBCELLULAR LOCATION</scope>
    <scope>TISSUE SPECIFICITY</scope>
</reference>
<accession>Q9Y6A4</accession>
<feature type="chain" id="PRO_0000296398" description="Cilia- and flagella-associated protein 20">
    <location>
        <begin position="1"/>
        <end position="193"/>
    </location>
</feature>
<sequence>MFKNTFQSGFLSILYSIGSKPLQIWDKKVRNGHIKRITDNDIQSLVLEIEGTNVSTTYITCPADPKKTLGIKLPFLVMIIKNLKKYFTFEVQVLDDKNVRRRFRASNYQSTTRVKPFICTMPMRLDDGWNQIQFNLLDFTRRAYGTNYIETLRVQIHANCRIRRVYFSDRLYSEDELPAEFKLYLPVQNKAKQ</sequence>
<proteinExistence type="evidence at protein level"/>
<keyword id="KW-0002">3D-structure</keyword>
<keyword id="KW-0966">Cell projection</keyword>
<keyword id="KW-0969">Cilium</keyword>
<keyword id="KW-0963">Cytoplasm</keyword>
<keyword id="KW-0206">Cytoskeleton</keyword>
<keyword id="KW-0282">Flagellum</keyword>
<keyword id="KW-0493">Microtubule</keyword>
<keyword id="KW-0539">Nucleus</keyword>
<keyword id="KW-1267">Proteomics identification</keyword>
<keyword id="KW-1185">Reference proteome</keyword>
<protein>
    <recommendedName>
        <fullName>Cilia- and flagella-associated protein 20</fullName>
    </recommendedName>
    <alternativeName>
        <fullName>Basal body up-regulated protein 22</fullName>
    </alternativeName>
    <alternativeName>
        <fullName>Transcription factor IIB</fullName>
    </alternativeName>
</protein>
<name>CFA20_HUMAN</name>
<dbReference type="EMBL" id="AF087845">
    <property type="protein sequence ID" value="AAP97158.1"/>
    <property type="molecule type" value="mRNA"/>
</dbReference>
<dbReference type="EMBL" id="AF093680">
    <property type="protein sequence ID" value="AAD40382.1"/>
    <property type="molecule type" value="mRNA"/>
</dbReference>
<dbReference type="EMBL" id="AC009107">
    <property type="status" value="NOT_ANNOTATED_CDS"/>
    <property type="molecule type" value="Genomic_DNA"/>
</dbReference>
<dbReference type="EMBL" id="AC026771">
    <property type="status" value="NOT_ANNOTATED_CDS"/>
    <property type="molecule type" value="Genomic_DNA"/>
</dbReference>
<dbReference type="EMBL" id="BC005152">
    <property type="protein sequence ID" value="AAH05152.1"/>
    <property type="molecule type" value="mRNA"/>
</dbReference>
<dbReference type="CCDS" id="CCDS10793.1"/>
<dbReference type="RefSeq" id="NP_037374.1">
    <property type="nucleotide sequence ID" value="NM_013242.3"/>
</dbReference>
<dbReference type="PDB" id="7UNG">
    <property type="method" value="EM"/>
    <property type="resolution" value="3.60 A"/>
    <property type="chains" value="XA/XB/XC/XD/XE/XF/XG=1-193"/>
</dbReference>
<dbReference type="PDB" id="8J07">
    <property type="method" value="EM"/>
    <property type="resolution" value="4.10 A"/>
    <property type="chains" value="XA/XB/XC/XD/XE/XF/XG/XH/XI/XJ/XK/XL/XM=1-193"/>
</dbReference>
<dbReference type="PDBsum" id="7UNG"/>
<dbReference type="PDBsum" id="8J07"/>
<dbReference type="EMDB" id="EMD-26624"/>
<dbReference type="EMDB" id="EMD-35888"/>
<dbReference type="SMR" id="Q9Y6A4"/>
<dbReference type="BioGRID" id="118873">
    <property type="interactions" value="101"/>
</dbReference>
<dbReference type="CORUM" id="Q9Y6A4"/>
<dbReference type="FunCoup" id="Q9Y6A4">
    <property type="interactions" value="1030"/>
</dbReference>
<dbReference type="IntAct" id="Q9Y6A4">
    <property type="interactions" value="46"/>
</dbReference>
<dbReference type="MINT" id="Q9Y6A4"/>
<dbReference type="STRING" id="9606.ENSP00000262498"/>
<dbReference type="CarbonylDB" id="Q9Y6A4"/>
<dbReference type="GlyGen" id="Q9Y6A4">
    <property type="glycosylation" value="1 site, 1 O-linked glycan (1 site)"/>
</dbReference>
<dbReference type="iPTMnet" id="Q9Y6A4"/>
<dbReference type="PhosphoSitePlus" id="Q9Y6A4"/>
<dbReference type="BioMuta" id="CFAP20"/>
<dbReference type="DMDM" id="74753521"/>
<dbReference type="jPOST" id="Q9Y6A4"/>
<dbReference type="MassIVE" id="Q9Y6A4"/>
<dbReference type="PaxDb" id="9606-ENSP00000262498"/>
<dbReference type="PeptideAtlas" id="Q9Y6A4"/>
<dbReference type="ProteomicsDB" id="86641"/>
<dbReference type="Pumba" id="Q9Y6A4"/>
<dbReference type="Antibodypedia" id="15216">
    <property type="antibodies" value="115 antibodies from 23 providers"/>
</dbReference>
<dbReference type="DNASU" id="29105"/>
<dbReference type="Ensembl" id="ENST00000262498.8">
    <property type="protein sequence ID" value="ENSP00000262498.3"/>
    <property type="gene ID" value="ENSG00000070761.8"/>
</dbReference>
<dbReference type="GeneID" id="29105"/>
<dbReference type="KEGG" id="hsa:29105"/>
<dbReference type="MANE-Select" id="ENST00000262498.8">
    <property type="protein sequence ID" value="ENSP00000262498.3"/>
    <property type="RefSeq nucleotide sequence ID" value="NM_013242.3"/>
    <property type="RefSeq protein sequence ID" value="NP_037374.1"/>
</dbReference>
<dbReference type="UCSC" id="uc002enb.2">
    <property type="organism name" value="human"/>
</dbReference>
<dbReference type="AGR" id="HGNC:29523"/>
<dbReference type="CTD" id="29105"/>
<dbReference type="DisGeNET" id="29105"/>
<dbReference type="GeneCards" id="CFAP20"/>
<dbReference type="HGNC" id="HGNC:29523">
    <property type="gene designation" value="CFAP20"/>
</dbReference>
<dbReference type="HPA" id="ENSG00000070761">
    <property type="expression patterns" value="Low tissue specificity"/>
</dbReference>
<dbReference type="MalaCards" id="CFAP20"/>
<dbReference type="MIM" id="617906">
    <property type="type" value="gene"/>
</dbReference>
<dbReference type="neXtProt" id="NX_Q9Y6A4"/>
<dbReference type="OpenTargets" id="ENSG00000070761"/>
<dbReference type="PharmGKB" id="PA162378384"/>
<dbReference type="VEuPathDB" id="HostDB:ENSG00000070761"/>
<dbReference type="eggNOG" id="KOG3213">
    <property type="taxonomic scope" value="Eukaryota"/>
</dbReference>
<dbReference type="GeneTree" id="ENSGT00390000004554"/>
<dbReference type="HOGENOM" id="CLU_060610_1_1_1"/>
<dbReference type="InParanoid" id="Q9Y6A4"/>
<dbReference type="OMA" id="TTYISCP"/>
<dbReference type="OrthoDB" id="7486196at2759"/>
<dbReference type="PAN-GO" id="Q9Y6A4">
    <property type="GO annotations" value="5 GO annotations based on evolutionary models"/>
</dbReference>
<dbReference type="PhylomeDB" id="Q9Y6A4"/>
<dbReference type="TreeFam" id="TF313405"/>
<dbReference type="PathwayCommons" id="Q9Y6A4"/>
<dbReference type="SignaLink" id="Q9Y6A4"/>
<dbReference type="BioGRID-ORCS" id="29105">
    <property type="hits" value="483 hits in 1137 CRISPR screens"/>
</dbReference>
<dbReference type="ChiTaRS" id="CFAP20">
    <property type="organism name" value="human"/>
</dbReference>
<dbReference type="GenomeRNAi" id="29105"/>
<dbReference type="Pharos" id="Q9Y6A4">
    <property type="development level" value="Tbio"/>
</dbReference>
<dbReference type="PRO" id="PR:Q9Y6A4"/>
<dbReference type="Proteomes" id="UP000005640">
    <property type="component" value="Chromosome 16"/>
</dbReference>
<dbReference type="RNAct" id="Q9Y6A4">
    <property type="molecule type" value="protein"/>
</dbReference>
<dbReference type="Bgee" id="ENSG00000070761">
    <property type="expression patterns" value="Expressed in bronchial epithelial cell and 197 other cell types or tissues"/>
</dbReference>
<dbReference type="ExpressionAtlas" id="Q9Y6A4">
    <property type="expression patterns" value="baseline and differential"/>
</dbReference>
<dbReference type="GO" id="GO:0160112">
    <property type="term" value="C:axonemal B tubule inner sheath"/>
    <property type="evidence" value="ECO:0007669"/>
    <property type="project" value="Ensembl"/>
</dbReference>
<dbReference type="GO" id="GO:0005879">
    <property type="term" value="C:axonemal microtubule"/>
    <property type="evidence" value="ECO:0000314"/>
    <property type="project" value="UniProtKB"/>
</dbReference>
<dbReference type="GO" id="GO:0005814">
    <property type="term" value="C:centriole"/>
    <property type="evidence" value="ECO:0000314"/>
    <property type="project" value="UniProtKB"/>
</dbReference>
<dbReference type="GO" id="GO:0036064">
    <property type="term" value="C:ciliary basal body"/>
    <property type="evidence" value="ECO:0000314"/>
    <property type="project" value="UniProtKB"/>
</dbReference>
<dbReference type="GO" id="GO:0005929">
    <property type="term" value="C:cilium"/>
    <property type="evidence" value="ECO:0000314"/>
    <property type="project" value="UniProtKB"/>
</dbReference>
<dbReference type="GO" id="GO:0070062">
    <property type="term" value="C:extracellular exosome"/>
    <property type="evidence" value="ECO:0007005"/>
    <property type="project" value="UniProtKB"/>
</dbReference>
<dbReference type="GO" id="GO:0031514">
    <property type="term" value="C:motile cilium"/>
    <property type="evidence" value="ECO:0000318"/>
    <property type="project" value="GO_Central"/>
</dbReference>
<dbReference type="GO" id="GO:0005654">
    <property type="term" value="C:nucleoplasm"/>
    <property type="evidence" value="ECO:0000314"/>
    <property type="project" value="HPA"/>
</dbReference>
<dbReference type="GO" id="GO:0036126">
    <property type="term" value="C:sperm flagellum"/>
    <property type="evidence" value="ECO:0000250"/>
    <property type="project" value="UniProtKB"/>
</dbReference>
<dbReference type="GO" id="GO:0003723">
    <property type="term" value="F:RNA binding"/>
    <property type="evidence" value="ECO:0007005"/>
    <property type="project" value="UniProtKB"/>
</dbReference>
<dbReference type="GO" id="GO:0060271">
    <property type="term" value="P:cilium assembly"/>
    <property type="evidence" value="ECO:0000315"/>
    <property type="project" value="UniProtKB"/>
</dbReference>
<dbReference type="GO" id="GO:0030317">
    <property type="term" value="P:flagellated sperm motility"/>
    <property type="evidence" value="ECO:0000250"/>
    <property type="project" value="UniProtKB"/>
</dbReference>
<dbReference type="GO" id="GO:2000147">
    <property type="term" value="P:positive regulation of cell motility"/>
    <property type="evidence" value="ECO:0000314"/>
    <property type="project" value="UniProtKB"/>
</dbReference>
<dbReference type="GO" id="GO:2000253">
    <property type="term" value="P:positive regulation of feeding behavior"/>
    <property type="evidence" value="ECO:0000314"/>
    <property type="project" value="UniProtKB"/>
</dbReference>
<dbReference type="GO" id="GO:0018095">
    <property type="term" value="P:protein polyglutamylation"/>
    <property type="evidence" value="ECO:0000315"/>
    <property type="project" value="UniProtKB"/>
</dbReference>
<dbReference type="GO" id="GO:0060296">
    <property type="term" value="P:regulation of cilium beat frequency involved in ciliary motility"/>
    <property type="evidence" value="ECO:0000314"/>
    <property type="project" value="UniProtKB"/>
</dbReference>
<dbReference type="InterPro" id="IPR040441">
    <property type="entry name" value="CFA20/CFAP20DC"/>
</dbReference>
<dbReference type="InterPro" id="IPR007714">
    <property type="entry name" value="CFA20_dom"/>
</dbReference>
<dbReference type="PANTHER" id="PTHR12458">
    <property type="entry name" value="ORF PROTEIN"/>
    <property type="match status" value="1"/>
</dbReference>
<dbReference type="Pfam" id="PF05018">
    <property type="entry name" value="CFA20_dom"/>
    <property type="match status" value="1"/>
</dbReference>
<evidence type="ECO:0000250" key="1">
    <source>
        <dbReference type="UniProtKB" id="Q8BTU1"/>
    </source>
</evidence>
<evidence type="ECO:0000269" key="2">
    <source>
    </source>
</evidence>
<evidence type="ECO:0000269" key="3">
    <source>
    </source>
</evidence>
<evidence type="ECO:0000305" key="4"/>
<evidence type="ECO:0000312" key="5">
    <source>
        <dbReference type="HGNC" id="HGNC:29523"/>
    </source>
</evidence>
<evidence type="ECO:0007744" key="6">
    <source>
        <dbReference type="PDB" id="7UNG"/>
    </source>
</evidence>
<comment type="function">
    <text evidence="2 3">Cilium- and flagellum-specific protein that plays a role in axonemal structure organization and motility (PubMed:24414207). Microtubule inner protein (MIP) part of the dynein-decorated doublet microtubules (DMTs) in cilia axoneme, which is required for motile cilia beating (PubMed:36191189). Involved in the regulation of the size and morphology of cilia (PubMed:24414207). Required for axonemal microtubules polyglutamylation (PubMed:24414207).</text>
</comment>
<comment type="subunit">
    <text evidence="1">Microtubule inner protein component of sperm flagellar doublet microtubules.</text>
</comment>
<comment type="interaction">
    <interactant intactId="EBI-1046872">
        <id>Q9Y6A4</id>
    </interactant>
    <interactant intactId="EBI-3449344">
        <id>Q9Y2Y0</id>
        <label>ARL2BP</label>
    </interactant>
    <organismsDiffer>false</organismsDiffer>
    <experiments>7</experiments>
</comment>
<comment type="interaction">
    <interactant intactId="EBI-1046872">
        <id>Q9Y6A4</id>
    </interactant>
    <interactant intactId="EBI-751069">
        <id>Q8N2M8</id>
        <label>CLASRP</label>
    </interactant>
    <organismsDiffer>false</organismsDiffer>
    <experiments>5</experiments>
</comment>
<comment type="interaction">
    <interactant intactId="EBI-1046872">
        <id>Q9Y6A4</id>
    </interactant>
    <interactant intactId="EBI-5323863">
        <id>Q5S007</id>
        <label>LRRK2</label>
    </interactant>
    <organismsDiffer>false</organismsDiffer>
    <experiments>3</experiments>
</comment>
<comment type="interaction">
    <interactant intactId="EBI-1046872">
        <id>Q9Y6A4</id>
    </interactant>
    <interactant intactId="EBI-1055938">
        <id>Q12872</id>
        <label>SFSWAP</label>
    </interactant>
    <organismsDiffer>false</organismsDiffer>
    <experiments>3</experiments>
</comment>
<comment type="subcellular location">
    <subcellularLocation>
        <location evidence="2">Nucleus</location>
    </subcellularLocation>
    <subcellularLocation>
        <location evidence="2">Cytoplasm</location>
        <location evidence="2">Cytoskeleton</location>
        <location evidence="2">Microtubule organizing center</location>
        <location evidence="2">Centrosome</location>
        <location evidence="2">Centriole</location>
    </subcellularLocation>
    <subcellularLocation>
        <location evidence="2">Cytoplasm</location>
        <location evidence="2">Cytoskeleton</location>
        <location evidence="2">Cilium basal body</location>
    </subcellularLocation>
    <subcellularLocation>
        <location evidence="2 3">Cytoplasm</location>
        <location evidence="2 3">Cytoskeleton</location>
        <location evidence="2 3">Cilium axoneme</location>
    </subcellularLocation>
    <subcellularLocation>
        <location evidence="1">Cytoplasm</location>
        <location evidence="1">Cytoskeleton</location>
        <location evidence="1">Flagellum axoneme</location>
    </subcellularLocation>
</comment>
<comment type="similarity">
    <text evidence="4">Belongs to the CFAP20 family.</text>
</comment>
<gene>
    <name evidence="5" type="primary">CFAP20</name>
    <name type="synonym">BUG22</name>
    <name type="synonym">C16orf80</name>
    <name type="synonym">GTL3</name>
</gene>
<organism>
    <name type="scientific">Homo sapiens</name>
    <name type="common">Human</name>
    <dbReference type="NCBI Taxonomy" id="9606"/>
    <lineage>
        <taxon>Eukaryota</taxon>
        <taxon>Metazoa</taxon>
        <taxon>Chordata</taxon>
        <taxon>Craniata</taxon>
        <taxon>Vertebrata</taxon>
        <taxon>Euteleostomi</taxon>
        <taxon>Mammalia</taxon>
        <taxon>Eutheria</taxon>
        <taxon>Euarchontoglires</taxon>
        <taxon>Primates</taxon>
        <taxon>Haplorrhini</taxon>
        <taxon>Catarrhini</taxon>
        <taxon>Hominidae</taxon>
        <taxon>Homo</taxon>
    </lineage>
</organism>